<organism>
    <name type="scientific">Campylobacter curvus (strain 525.92)</name>
    <dbReference type="NCBI Taxonomy" id="360105"/>
    <lineage>
        <taxon>Bacteria</taxon>
        <taxon>Pseudomonadati</taxon>
        <taxon>Campylobacterota</taxon>
        <taxon>Epsilonproteobacteria</taxon>
        <taxon>Campylobacterales</taxon>
        <taxon>Campylobacteraceae</taxon>
        <taxon>Campylobacter</taxon>
    </lineage>
</organism>
<protein>
    <recommendedName>
        <fullName evidence="1">Phosphoglycerate kinase</fullName>
        <ecNumber evidence="1">2.7.2.3</ecNumber>
    </recommendedName>
</protein>
<evidence type="ECO:0000255" key="1">
    <source>
        <dbReference type="HAMAP-Rule" id="MF_00145"/>
    </source>
</evidence>
<proteinExistence type="inferred from homology"/>
<keyword id="KW-0067">ATP-binding</keyword>
<keyword id="KW-0963">Cytoplasm</keyword>
<keyword id="KW-0324">Glycolysis</keyword>
<keyword id="KW-0418">Kinase</keyword>
<keyword id="KW-0547">Nucleotide-binding</keyword>
<keyword id="KW-1185">Reference proteome</keyword>
<keyword id="KW-0808">Transferase</keyword>
<reference key="1">
    <citation type="submission" date="2007-07" db="EMBL/GenBank/DDBJ databases">
        <title>Genome sequence of Campylobacter curvus 525.92 isolated from human feces.</title>
        <authorList>
            <person name="Fouts D.E."/>
            <person name="Mongodin E.F."/>
            <person name="Puiu D."/>
            <person name="Sebastian Y."/>
            <person name="Miller W.G."/>
            <person name="Mandrell R.E."/>
            <person name="Lastovica A.J."/>
            <person name="Nelson K.E."/>
        </authorList>
    </citation>
    <scope>NUCLEOTIDE SEQUENCE [LARGE SCALE GENOMIC DNA]</scope>
    <source>
        <strain>525.92</strain>
    </source>
</reference>
<name>PGK_CAMC5</name>
<accession>A7GWT1</accession>
<sequence>MSDILSISELNLAKKRVFIRCDFNVPMDEFLNITDDRRIRSAIPTIRYCLDNGCSVVLASHLGRPKSGFEEKFSLKGVAKRLSRLLDRDVIFANDVIGSDAQNKASALKSGEILMLENLRFEKGETKNDEILAGELAKFGEIYINDAFGVCHRAHASVEAITKFYDDEHKAAGFLLQKEINFAQNLIKKPTRPFVAVVGGSKVSGKLQALHNLLPRVDKLIIGGGMAFTFLKSLGENIGNSLLEEELIDDAREILKKGKELGVKIYLPVDVVAAQSFSAESAVKYVTVQEIPSGWMGLDIGPASVRLFKEVLADAQTVWWNGPMGVFEMDKFSKGSIKMSHAIVETHATTVVGGGDTADVVERAGDADEMTFISTGGGASLELIEGKELPGIKPLRKASE</sequence>
<dbReference type="EC" id="2.7.2.3" evidence="1"/>
<dbReference type="EMBL" id="CP000767">
    <property type="protein sequence ID" value="EAU00956.1"/>
    <property type="molecule type" value="Genomic_DNA"/>
</dbReference>
<dbReference type="RefSeq" id="WP_011991879.1">
    <property type="nucleotide sequence ID" value="NC_009715.2"/>
</dbReference>
<dbReference type="SMR" id="A7GWT1"/>
<dbReference type="STRING" id="360105.CCV52592_1248"/>
<dbReference type="KEGG" id="ccv:CCV52592_1248"/>
<dbReference type="HOGENOM" id="CLU_025427_0_2_7"/>
<dbReference type="OrthoDB" id="9808460at2"/>
<dbReference type="UniPathway" id="UPA00109">
    <property type="reaction ID" value="UER00185"/>
</dbReference>
<dbReference type="Proteomes" id="UP000006380">
    <property type="component" value="Chromosome"/>
</dbReference>
<dbReference type="GO" id="GO:0005829">
    <property type="term" value="C:cytosol"/>
    <property type="evidence" value="ECO:0007669"/>
    <property type="project" value="TreeGrafter"/>
</dbReference>
<dbReference type="GO" id="GO:0043531">
    <property type="term" value="F:ADP binding"/>
    <property type="evidence" value="ECO:0007669"/>
    <property type="project" value="TreeGrafter"/>
</dbReference>
<dbReference type="GO" id="GO:0005524">
    <property type="term" value="F:ATP binding"/>
    <property type="evidence" value="ECO:0007669"/>
    <property type="project" value="UniProtKB-KW"/>
</dbReference>
<dbReference type="GO" id="GO:0004618">
    <property type="term" value="F:phosphoglycerate kinase activity"/>
    <property type="evidence" value="ECO:0007669"/>
    <property type="project" value="UniProtKB-UniRule"/>
</dbReference>
<dbReference type="GO" id="GO:0006094">
    <property type="term" value="P:gluconeogenesis"/>
    <property type="evidence" value="ECO:0007669"/>
    <property type="project" value="TreeGrafter"/>
</dbReference>
<dbReference type="GO" id="GO:0006096">
    <property type="term" value="P:glycolytic process"/>
    <property type="evidence" value="ECO:0007669"/>
    <property type="project" value="UniProtKB-UniRule"/>
</dbReference>
<dbReference type="CDD" id="cd00318">
    <property type="entry name" value="Phosphoglycerate_kinase"/>
    <property type="match status" value="1"/>
</dbReference>
<dbReference type="FunFam" id="3.40.50.1260:FF:000003">
    <property type="entry name" value="Phosphoglycerate kinase"/>
    <property type="match status" value="1"/>
</dbReference>
<dbReference type="FunFam" id="3.40.50.1260:FF:000006">
    <property type="entry name" value="Phosphoglycerate kinase"/>
    <property type="match status" value="1"/>
</dbReference>
<dbReference type="Gene3D" id="3.40.50.1260">
    <property type="entry name" value="Phosphoglycerate kinase, N-terminal domain"/>
    <property type="match status" value="2"/>
</dbReference>
<dbReference type="HAMAP" id="MF_00145">
    <property type="entry name" value="Phosphoglyc_kinase"/>
    <property type="match status" value="1"/>
</dbReference>
<dbReference type="InterPro" id="IPR001576">
    <property type="entry name" value="Phosphoglycerate_kinase"/>
</dbReference>
<dbReference type="InterPro" id="IPR015911">
    <property type="entry name" value="Phosphoglycerate_kinase_CS"/>
</dbReference>
<dbReference type="InterPro" id="IPR015824">
    <property type="entry name" value="Phosphoglycerate_kinase_N"/>
</dbReference>
<dbReference type="InterPro" id="IPR036043">
    <property type="entry name" value="Phosphoglycerate_kinase_sf"/>
</dbReference>
<dbReference type="PANTHER" id="PTHR11406">
    <property type="entry name" value="PHOSPHOGLYCERATE KINASE"/>
    <property type="match status" value="1"/>
</dbReference>
<dbReference type="PANTHER" id="PTHR11406:SF23">
    <property type="entry name" value="PHOSPHOGLYCERATE KINASE 1, CHLOROPLASTIC-RELATED"/>
    <property type="match status" value="1"/>
</dbReference>
<dbReference type="Pfam" id="PF00162">
    <property type="entry name" value="PGK"/>
    <property type="match status" value="1"/>
</dbReference>
<dbReference type="PIRSF" id="PIRSF000724">
    <property type="entry name" value="Pgk"/>
    <property type="match status" value="1"/>
</dbReference>
<dbReference type="PRINTS" id="PR00477">
    <property type="entry name" value="PHGLYCKINASE"/>
</dbReference>
<dbReference type="SUPFAM" id="SSF53748">
    <property type="entry name" value="Phosphoglycerate kinase"/>
    <property type="match status" value="1"/>
</dbReference>
<dbReference type="PROSITE" id="PS00111">
    <property type="entry name" value="PGLYCERATE_KINASE"/>
    <property type="match status" value="1"/>
</dbReference>
<feature type="chain" id="PRO_1000203322" description="Phosphoglycerate kinase">
    <location>
        <begin position="1"/>
        <end position="400"/>
    </location>
</feature>
<feature type="binding site" evidence="1">
    <location>
        <begin position="22"/>
        <end position="24"/>
    </location>
    <ligand>
        <name>substrate</name>
    </ligand>
</feature>
<feature type="binding site" evidence="1">
    <location>
        <position position="38"/>
    </location>
    <ligand>
        <name>substrate</name>
    </ligand>
</feature>
<feature type="binding site" evidence="1">
    <location>
        <begin position="61"/>
        <end position="64"/>
    </location>
    <ligand>
        <name>substrate</name>
    </ligand>
</feature>
<feature type="binding site" evidence="1">
    <location>
        <position position="120"/>
    </location>
    <ligand>
        <name>substrate</name>
    </ligand>
</feature>
<feature type="binding site" evidence="1">
    <location>
        <position position="153"/>
    </location>
    <ligand>
        <name>substrate</name>
    </ligand>
</feature>
<feature type="binding site" evidence="1">
    <location>
        <position position="206"/>
    </location>
    <ligand>
        <name>ATP</name>
        <dbReference type="ChEBI" id="CHEBI:30616"/>
    </ligand>
</feature>
<feature type="binding site" evidence="1">
    <location>
        <position position="297"/>
    </location>
    <ligand>
        <name>ATP</name>
        <dbReference type="ChEBI" id="CHEBI:30616"/>
    </ligand>
</feature>
<feature type="binding site" evidence="1">
    <location>
        <position position="328"/>
    </location>
    <ligand>
        <name>ATP</name>
        <dbReference type="ChEBI" id="CHEBI:30616"/>
    </ligand>
</feature>
<feature type="binding site" evidence="1">
    <location>
        <begin position="354"/>
        <end position="357"/>
    </location>
    <ligand>
        <name>ATP</name>
        <dbReference type="ChEBI" id="CHEBI:30616"/>
    </ligand>
</feature>
<gene>
    <name evidence="1" type="primary">pgk</name>
    <name type="ordered locus">Ccur92_03690</name>
    <name type="ORF">CCV52592_1248</name>
</gene>
<comment type="catalytic activity">
    <reaction evidence="1">
        <text>(2R)-3-phosphoglycerate + ATP = (2R)-3-phospho-glyceroyl phosphate + ADP</text>
        <dbReference type="Rhea" id="RHEA:14801"/>
        <dbReference type="ChEBI" id="CHEBI:30616"/>
        <dbReference type="ChEBI" id="CHEBI:57604"/>
        <dbReference type="ChEBI" id="CHEBI:58272"/>
        <dbReference type="ChEBI" id="CHEBI:456216"/>
        <dbReference type="EC" id="2.7.2.3"/>
    </reaction>
</comment>
<comment type="pathway">
    <text evidence="1">Carbohydrate degradation; glycolysis; pyruvate from D-glyceraldehyde 3-phosphate: step 2/5.</text>
</comment>
<comment type="subunit">
    <text evidence="1">Monomer.</text>
</comment>
<comment type="subcellular location">
    <subcellularLocation>
        <location evidence="1">Cytoplasm</location>
    </subcellularLocation>
</comment>
<comment type="similarity">
    <text evidence="1">Belongs to the phosphoglycerate kinase family.</text>
</comment>